<reference key="1">
    <citation type="journal article" date="1999" name="Science">
        <title>Genome sequence of the radioresistant bacterium Deinococcus radiodurans R1.</title>
        <authorList>
            <person name="White O."/>
            <person name="Eisen J.A."/>
            <person name="Heidelberg J.F."/>
            <person name="Hickey E.K."/>
            <person name="Peterson J.D."/>
            <person name="Dodson R.J."/>
            <person name="Haft D.H."/>
            <person name="Gwinn M.L."/>
            <person name="Nelson W.C."/>
            <person name="Richardson D.L."/>
            <person name="Moffat K.S."/>
            <person name="Qin H."/>
            <person name="Jiang L."/>
            <person name="Pamphile W."/>
            <person name="Crosby M."/>
            <person name="Shen M."/>
            <person name="Vamathevan J.J."/>
            <person name="Lam P."/>
            <person name="McDonald L.A."/>
            <person name="Utterback T.R."/>
            <person name="Zalewski C."/>
            <person name="Makarova K.S."/>
            <person name="Aravind L."/>
            <person name="Daly M.J."/>
            <person name="Minton K.W."/>
            <person name="Fleischmann R.D."/>
            <person name="Ketchum K.A."/>
            <person name="Nelson K.E."/>
            <person name="Salzberg S.L."/>
            <person name="Smith H.O."/>
            <person name="Venter J.C."/>
            <person name="Fraser C.M."/>
        </authorList>
    </citation>
    <scope>NUCLEOTIDE SEQUENCE [LARGE SCALE GENOMIC DNA]</scope>
    <source>
        <strain>ATCC 13939 / DSM 20539 / JCM 16871 / CCUG 27074 / LMG 4051 / NBRC 15346 / NCIMB 9279 / VKM B-1422 / R1</strain>
    </source>
</reference>
<accession>Q9RZ06</accession>
<organism>
    <name type="scientific">Deinococcus radiodurans (strain ATCC 13939 / DSM 20539 / JCM 16871 / CCUG 27074 / LMG 4051 / NBRC 15346 / NCIMB 9279 / VKM B-1422 / R1)</name>
    <dbReference type="NCBI Taxonomy" id="243230"/>
    <lineage>
        <taxon>Bacteria</taxon>
        <taxon>Thermotogati</taxon>
        <taxon>Deinococcota</taxon>
        <taxon>Deinococci</taxon>
        <taxon>Deinococcales</taxon>
        <taxon>Deinococcaceae</taxon>
        <taxon>Deinococcus</taxon>
    </lineage>
</organism>
<protein>
    <recommendedName>
        <fullName>Histidine ammonia-lyase</fullName>
        <shortName>Histidase</shortName>
        <ecNumber>4.3.1.3</ecNumber>
    </recommendedName>
</protein>
<sequence length="524" mass="55536">MILDRDLNLEQFISVVRHGEQVELSAAARERIARARTVIEQIVEGDTPIYGVNTGFGKFENVQIDRSQLAQLQHNLIVSHAIGMGEPLPAEVVRGMLLLRAQSLSLGHSGVRVEVVELLLALLNADALPVVPSQGSVGASGDLAPLAHLALGLIGLGDIEYQGQVRPAADVLAELGLSPVQLQAKEGLALINGTQLMGSLLALALHDAQVLLGTANLAAAMTVEARYGSHRPFQPDVVGLRPHPGALAVAAELREFLAGSEIAPSHLTGDGKVQDAYSLRAVPQVHGATWDALAQAERVLAVEFASVTDNPLIFPETGEVVSGGNFHGQPLAVTIDALKVAVAELGSISERRTEQLLNPALSGLPAFLTPNGGLNSGFMIAQYTSAALVSENKVLSHPASVDSIPTSANQEDHVSMGAHAARQLRQIVANVQTVLSIELLCAAQGLDFQQLRAGRGVQAAYEYVRTFVPTLTEDRYFRPDLLRLRGELVSGELLRVAQAADTQAPAPAKLPDSGDEDRDTTSRH</sequence>
<evidence type="ECO:0000250" key="1"/>
<evidence type="ECO:0000256" key="2">
    <source>
        <dbReference type="SAM" id="MobiDB-lite"/>
    </source>
</evidence>
<evidence type="ECO:0000305" key="3"/>
<keyword id="KW-0963">Cytoplasm</keyword>
<keyword id="KW-0369">Histidine metabolism</keyword>
<keyword id="KW-0456">Lyase</keyword>
<keyword id="KW-1185">Reference proteome</keyword>
<feature type="chain" id="PRO_0000161002" description="Histidine ammonia-lyase">
    <location>
        <begin position="1"/>
        <end position="524"/>
    </location>
</feature>
<feature type="region of interest" description="Disordered" evidence="2">
    <location>
        <begin position="500"/>
        <end position="524"/>
    </location>
</feature>
<feature type="modified residue" description="2,3-didehydroalanine (Ser)" evidence="1">
    <location>
        <position position="140"/>
    </location>
</feature>
<feature type="cross-link" description="5-imidazolinone (Ala-Gly)" evidence="1">
    <location>
        <begin position="139"/>
        <end position="141"/>
    </location>
</feature>
<proteinExistence type="inferred from homology"/>
<gene>
    <name type="primary">hutH</name>
    <name type="ordered locus">DR_A0147</name>
</gene>
<dbReference type="EC" id="4.3.1.3"/>
<dbReference type="EMBL" id="AE001825">
    <property type="protein sequence ID" value="AAF12216.1"/>
    <property type="molecule type" value="Genomic_DNA"/>
</dbReference>
<dbReference type="PIR" id="F75610">
    <property type="entry name" value="F75610"/>
</dbReference>
<dbReference type="RefSeq" id="NP_285471.1">
    <property type="nucleotide sequence ID" value="NC_001264.1"/>
</dbReference>
<dbReference type="RefSeq" id="WP_010889407.1">
    <property type="nucleotide sequence ID" value="NC_001264.1"/>
</dbReference>
<dbReference type="SMR" id="Q9RZ06"/>
<dbReference type="FunCoup" id="Q9RZ06">
    <property type="interactions" value="69"/>
</dbReference>
<dbReference type="STRING" id="243230.DR_A0147"/>
<dbReference type="PaxDb" id="243230-DR_A0147"/>
<dbReference type="EnsemblBacteria" id="AAF12216">
    <property type="protein sequence ID" value="AAF12216"/>
    <property type="gene ID" value="DR_A0147"/>
</dbReference>
<dbReference type="GeneID" id="69519042"/>
<dbReference type="KEGG" id="dra:DR_A0147"/>
<dbReference type="PATRIC" id="fig|243230.17.peg.3034"/>
<dbReference type="eggNOG" id="COG2986">
    <property type="taxonomic scope" value="Bacteria"/>
</dbReference>
<dbReference type="HOGENOM" id="CLU_014801_4_0_0"/>
<dbReference type="InParanoid" id="Q9RZ06"/>
<dbReference type="OrthoDB" id="9806955at2"/>
<dbReference type="UniPathway" id="UPA00379">
    <property type="reaction ID" value="UER00549"/>
</dbReference>
<dbReference type="Proteomes" id="UP000002524">
    <property type="component" value="Chromosome 2"/>
</dbReference>
<dbReference type="GO" id="GO:0005737">
    <property type="term" value="C:cytoplasm"/>
    <property type="evidence" value="ECO:0007669"/>
    <property type="project" value="UniProtKB-SubCell"/>
</dbReference>
<dbReference type="GO" id="GO:0004397">
    <property type="term" value="F:histidine ammonia-lyase activity"/>
    <property type="evidence" value="ECO:0000318"/>
    <property type="project" value="GO_Central"/>
</dbReference>
<dbReference type="GO" id="GO:0006548">
    <property type="term" value="P:L-histidine catabolic process"/>
    <property type="evidence" value="ECO:0000318"/>
    <property type="project" value="GO_Central"/>
</dbReference>
<dbReference type="GO" id="GO:0019556">
    <property type="term" value="P:L-histidine catabolic process to glutamate and formamide"/>
    <property type="evidence" value="ECO:0007669"/>
    <property type="project" value="UniProtKB-UniPathway"/>
</dbReference>
<dbReference type="GO" id="GO:0019557">
    <property type="term" value="P:L-histidine catabolic process to glutamate and formate"/>
    <property type="evidence" value="ECO:0007669"/>
    <property type="project" value="UniProtKB-UniPathway"/>
</dbReference>
<dbReference type="CDD" id="cd00332">
    <property type="entry name" value="PAL-HAL"/>
    <property type="match status" value="1"/>
</dbReference>
<dbReference type="FunFam" id="1.10.275.10:FF:000005">
    <property type="entry name" value="Histidine ammonia-lyase"/>
    <property type="match status" value="1"/>
</dbReference>
<dbReference type="FunFam" id="1.20.200.10:FF:000003">
    <property type="entry name" value="Histidine ammonia-lyase"/>
    <property type="match status" value="1"/>
</dbReference>
<dbReference type="Gene3D" id="1.20.200.10">
    <property type="entry name" value="Fumarase/aspartase (Central domain)"/>
    <property type="match status" value="1"/>
</dbReference>
<dbReference type="Gene3D" id="1.10.275.10">
    <property type="entry name" value="Fumarase/aspartase (N-terminal domain)"/>
    <property type="match status" value="1"/>
</dbReference>
<dbReference type="HAMAP" id="MF_00229">
    <property type="entry name" value="His_ammonia_lyase"/>
    <property type="match status" value="1"/>
</dbReference>
<dbReference type="InterPro" id="IPR001106">
    <property type="entry name" value="Aromatic_Lyase"/>
</dbReference>
<dbReference type="InterPro" id="IPR024083">
    <property type="entry name" value="Fumarase/histidase_N"/>
</dbReference>
<dbReference type="InterPro" id="IPR005921">
    <property type="entry name" value="HutH"/>
</dbReference>
<dbReference type="InterPro" id="IPR008948">
    <property type="entry name" value="L-Aspartase-like"/>
</dbReference>
<dbReference type="InterPro" id="IPR022313">
    <property type="entry name" value="Phe/His_NH3-lyase_AS"/>
</dbReference>
<dbReference type="NCBIfam" id="TIGR01225">
    <property type="entry name" value="hutH"/>
    <property type="match status" value="1"/>
</dbReference>
<dbReference type="NCBIfam" id="NF006871">
    <property type="entry name" value="PRK09367.1"/>
    <property type="match status" value="1"/>
</dbReference>
<dbReference type="PANTHER" id="PTHR10362">
    <property type="entry name" value="HISTIDINE AMMONIA-LYASE"/>
    <property type="match status" value="1"/>
</dbReference>
<dbReference type="Pfam" id="PF00221">
    <property type="entry name" value="Lyase_aromatic"/>
    <property type="match status" value="1"/>
</dbReference>
<dbReference type="SUPFAM" id="SSF48557">
    <property type="entry name" value="L-aspartase-like"/>
    <property type="match status" value="1"/>
</dbReference>
<dbReference type="PROSITE" id="PS00488">
    <property type="entry name" value="PAL_HISTIDASE"/>
    <property type="match status" value="1"/>
</dbReference>
<name>HUTH_DEIRA</name>
<comment type="catalytic activity">
    <reaction>
        <text>L-histidine = trans-urocanate + NH4(+)</text>
        <dbReference type="Rhea" id="RHEA:21232"/>
        <dbReference type="ChEBI" id="CHEBI:17771"/>
        <dbReference type="ChEBI" id="CHEBI:28938"/>
        <dbReference type="ChEBI" id="CHEBI:57595"/>
        <dbReference type="EC" id="4.3.1.3"/>
    </reaction>
</comment>
<comment type="pathway">
    <text>Amino-acid degradation; L-histidine degradation into L-glutamate; N-formimidoyl-L-glutamate from L-histidine: step 1/3.</text>
</comment>
<comment type="subcellular location">
    <subcellularLocation>
        <location evidence="3">Cytoplasm</location>
    </subcellularLocation>
</comment>
<comment type="PTM">
    <text evidence="1">Contains an active site 4-methylidene-imidazol-5-one (MIO), which is formed autocatalytically by cyclization and dehydration of residues Ala-Ser-Gly.</text>
</comment>
<comment type="similarity">
    <text evidence="3">Belongs to the PAL/histidase family.</text>
</comment>